<comment type="function">
    <text evidence="1">Catalyzes the oxidation of 5,10-methylenetetrahydrofolate to 5,10-methenyltetrahydrofolate and then the hydrolysis of 5,10-methenyltetrahydrofolate to 10-formyltetrahydrofolate.</text>
</comment>
<comment type="catalytic activity">
    <reaction evidence="1">
        <text>(6R)-5,10-methylene-5,6,7,8-tetrahydrofolate + NADP(+) = (6R)-5,10-methenyltetrahydrofolate + NADPH</text>
        <dbReference type="Rhea" id="RHEA:22812"/>
        <dbReference type="ChEBI" id="CHEBI:15636"/>
        <dbReference type="ChEBI" id="CHEBI:57455"/>
        <dbReference type="ChEBI" id="CHEBI:57783"/>
        <dbReference type="ChEBI" id="CHEBI:58349"/>
        <dbReference type="EC" id="1.5.1.5"/>
    </reaction>
</comment>
<comment type="catalytic activity">
    <reaction evidence="1">
        <text>(6R)-5,10-methenyltetrahydrofolate + H2O = (6R)-10-formyltetrahydrofolate + H(+)</text>
        <dbReference type="Rhea" id="RHEA:23700"/>
        <dbReference type="ChEBI" id="CHEBI:15377"/>
        <dbReference type="ChEBI" id="CHEBI:15378"/>
        <dbReference type="ChEBI" id="CHEBI:57455"/>
        <dbReference type="ChEBI" id="CHEBI:195366"/>
        <dbReference type="EC" id="3.5.4.9"/>
    </reaction>
</comment>
<comment type="pathway">
    <text evidence="1">One-carbon metabolism; tetrahydrofolate interconversion.</text>
</comment>
<comment type="subunit">
    <text evidence="1">Homodimer.</text>
</comment>
<comment type="similarity">
    <text evidence="1">Belongs to the tetrahydrofolate dehydrogenase/cyclohydrolase family.</text>
</comment>
<name>FOLD2_RUBXD</name>
<reference key="1">
    <citation type="submission" date="2006-06" db="EMBL/GenBank/DDBJ databases">
        <title>Complete sequence of Rubrobacter xylanophilus DSM 9941.</title>
        <authorList>
            <consortium name="US DOE Joint Genome Institute"/>
            <person name="Copeland A."/>
            <person name="Lucas S."/>
            <person name="Lapidus A."/>
            <person name="Barry K."/>
            <person name="Detter J.C."/>
            <person name="Glavina del Rio T."/>
            <person name="Hammon N."/>
            <person name="Israni S."/>
            <person name="Dalin E."/>
            <person name="Tice H."/>
            <person name="Pitluck S."/>
            <person name="Munk A.C."/>
            <person name="Brettin T."/>
            <person name="Bruce D."/>
            <person name="Han C."/>
            <person name="Tapia R."/>
            <person name="Gilna P."/>
            <person name="Schmutz J."/>
            <person name="Larimer F."/>
            <person name="Land M."/>
            <person name="Hauser L."/>
            <person name="Kyrpides N."/>
            <person name="Lykidis A."/>
            <person name="da Costa M.S."/>
            <person name="Rainey F.A."/>
            <person name="Empadinhas N."/>
            <person name="Jolivet E."/>
            <person name="Battista J.R."/>
            <person name="Richardson P."/>
        </authorList>
    </citation>
    <scope>NUCLEOTIDE SEQUENCE [LARGE SCALE GENOMIC DNA]</scope>
    <source>
        <strain>DSM 9941 / JCM 11954 / NBRC 16129 / PRD-1</strain>
    </source>
</reference>
<keyword id="KW-0028">Amino-acid biosynthesis</keyword>
<keyword id="KW-0368">Histidine biosynthesis</keyword>
<keyword id="KW-0378">Hydrolase</keyword>
<keyword id="KW-0486">Methionine biosynthesis</keyword>
<keyword id="KW-0511">Multifunctional enzyme</keyword>
<keyword id="KW-0521">NADP</keyword>
<keyword id="KW-0554">One-carbon metabolism</keyword>
<keyword id="KW-0560">Oxidoreductase</keyword>
<keyword id="KW-0658">Purine biosynthesis</keyword>
<keyword id="KW-1185">Reference proteome</keyword>
<protein>
    <recommendedName>
        <fullName evidence="1">Bifunctional protein FolD 2</fullName>
    </recommendedName>
    <domain>
        <recommendedName>
            <fullName evidence="1">Methylenetetrahydrofolate dehydrogenase</fullName>
            <ecNumber evidence="1">1.5.1.5</ecNumber>
        </recommendedName>
    </domain>
    <domain>
        <recommendedName>
            <fullName evidence="1">Methenyltetrahydrofolate cyclohydrolase</fullName>
            <ecNumber evidence="1">3.5.4.9</ecNumber>
        </recommendedName>
    </domain>
</protein>
<accession>Q1AVQ0</accession>
<feature type="chain" id="PRO_0000268486" description="Bifunctional protein FolD 2">
    <location>
        <begin position="1"/>
        <end position="320"/>
    </location>
</feature>
<feature type="binding site" evidence="1">
    <location>
        <begin position="173"/>
        <end position="175"/>
    </location>
    <ligand>
        <name>NADP(+)</name>
        <dbReference type="ChEBI" id="CHEBI:58349"/>
    </ligand>
</feature>
<feature type="binding site" evidence="1">
    <location>
        <position position="242"/>
    </location>
    <ligand>
        <name>NADP(+)</name>
        <dbReference type="ChEBI" id="CHEBI:58349"/>
    </ligand>
</feature>
<dbReference type="EC" id="1.5.1.5" evidence="1"/>
<dbReference type="EC" id="3.5.4.9" evidence="1"/>
<dbReference type="EMBL" id="CP000386">
    <property type="protein sequence ID" value="ABG04528.1"/>
    <property type="molecule type" value="Genomic_DNA"/>
</dbReference>
<dbReference type="RefSeq" id="WP_011564545.1">
    <property type="nucleotide sequence ID" value="NC_008148.1"/>
</dbReference>
<dbReference type="SMR" id="Q1AVQ0"/>
<dbReference type="STRING" id="266117.Rxyl_1566"/>
<dbReference type="KEGG" id="rxy:Rxyl_1566"/>
<dbReference type="eggNOG" id="COG0190">
    <property type="taxonomic scope" value="Bacteria"/>
</dbReference>
<dbReference type="HOGENOM" id="CLU_034045_2_1_11"/>
<dbReference type="OrthoDB" id="9803580at2"/>
<dbReference type="PhylomeDB" id="Q1AVQ0"/>
<dbReference type="UniPathway" id="UPA00193"/>
<dbReference type="Proteomes" id="UP000006637">
    <property type="component" value="Chromosome"/>
</dbReference>
<dbReference type="GO" id="GO:0005829">
    <property type="term" value="C:cytosol"/>
    <property type="evidence" value="ECO:0007669"/>
    <property type="project" value="TreeGrafter"/>
</dbReference>
<dbReference type="GO" id="GO:0004477">
    <property type="term" value="F:methenyltetrahydrofolate cyclohydrolase activity"/>
    <property type="evidence" value="ECO:0007669"/>
    <property type="project" value="UniProtKB-UniRule"/>
</dbReference>
<dbReference type="GO" id="GO:0004488">
    <property type="term" value="F:methylenetetrahydrofolate dehydrogenase (NADP+) activity"/>
    <property type="evidence" value="ECO:0007669"/>
    <property type="project" value="UniProtKB-UniRule"/>
</dbReference>
<dbReference type="GO" id="GO:0000105">
    <property type="term" value="P:L-histidine biosynthetic process"/>
    <property type="evidence" value="ECO:0007669"/>
    <property type="project" value="UniProtKB-KW"/>
</dbReference>
<dbReference type="GO" id="GO:0009086">
    <property type="term" value="P:methionine biosynthetic process"/>
    <property type="evidence" value="ECO:0007669"/>
    <property type="project" value="UniProtKB-KW"/>
</dbReference>
<dbReference type="GO" id="GO:0006164">
    <property type="term" value="P:purine nucleotide biosynthetic process"/>
    <property type="evidence" value="ECO:0007669"/>
    <property type="project" value="UniProtKB-KW"/>
</dbReference>
<dbReference type="GO" id="GO:0035999">
    <property type="term" value="P:tetrahydrofolate interconversion"/>
    <property type="evidence" value="ECO:0007669"/>
    <property type="project" value="UniProtKB-UniRule"/>
</dbReference>
<dbReference type="CDD" id="cd01080">
    <property type="entry name" value="NAD_bind_m-THF_DH_Cyclohyd"/>
    <property type="match status" value="1"/>
</dbReference>
<dbReference type="Gene3D" id="3.40.50.10860">
    <property type="entry name" value="Leucine Dehydrogenase, chain A, domain 1"/>
    <property type="match status" value="1"/>
</dbReference>
<dbReference type="Gene3D" id="3.40.50.720">
    <property type="entry name" value="NAD(P)-binding Rossmann-like Domain"/>
    <property type="match status" value="1"/>
</dbReference>
<dbReference type="HAMAP" id="MF_01576">
    <property type="entry name" value="THF_DHG_CYH"/>
    <property type="match status" value="1"/>
</dbReference>
<dbReference type="InterPro" id="IPR046346">
    <property type="entry name" value="Aminoacid_DH-like_N_sf"/>
</dbReference>
<dbReference type="InterPro" id="IPR036291">
    <property type="entry name" value="NAD(P)-bd_dom_sf"/>
</dbReference>
<dbReference type="InterPro" id="IPR000672">
    <property type="entry name" value="THF_DH/CycHdrlase"/>
</dbReference>
<dbReference type="InterPro" id="IPR020630">
    <property type="entry name" value="THF_DH/CycHdrlase_cat_dom"/>
</dbReference>
<dbReference type="InterPro" id="IPR020631">
    <property type="entry name" value="THF_DH/CycHdrlase_NAD-bd_dom"/>
</dbReference>
<dbReference type="PANTHER" id="PTHR48099:SF5">
    <property type="entry name" value="C-1-TETRAHYDROFOLATE SYNTHASE, CYTOPLASMIC"/>
    <property type="match status" value="1"/>
</dbReference>
<dbReference type="PANTHER" id="PTHR48099">
    <property type="entry name" value="C-1-TETRAHYDROFOLATE SYNTHASE, CYTOPLASMIC-RELATED"/>
    <property type="match status" value="1"/>
</dbReference>
<dbReference type="Pfam" id="PF00763">
    <property type="entry name" value="THF_DHG_CYH"/>
    <property type="match status" value="1"/>
</dbReference>
<dbReference type="Pfam" id="PF02882">
    <property type="entry name" value="THF_DHG_CYH_C"/>
    <property type="match status" value="1"/>
</dbReference>
<dbReference type="PRINTS" id="PR00085">
    <property type="entry name" value="THFDHDRGNASE"/>
</dbReference>
<dbReference type="SUPFAM" id="SSF53223">
    <property type="entry name" value="Aminoacid dehydrogenase-like, N-terminal domain"/>
    <property type="match status" value="1"/>
</dbReference>
<dbReference type="SUPFAM" id="SSF51735">
    <property type="entry name" value="NAD(P)-binding Rossmann-fold domains"/>
    <property type="match status" value="1"/>
</dbReference>
<gene>
    <name evidence="1" type="primary">folD2</name>
    <name type="ordered locus">Rxyl_1566</name>
</gene>
<organism>
    <name type="scientific">Rubrobacter xylanophilus (strain DSM 9941 / JCM 11954 / NBRC 16129 / PRD-1)</name>
    <dbReference type="NCBI Taxonomy" id="266117"/>
    <lineage>
        <taxon>Bacteria</taxon>
        <taxon>Bacillati</taxon>
        <taxon>Actinomycetota</taxon>
        <taxon>Rubrobacteria</taxon>
        <taxon>Rubrobacterales</taxon>
        <taxon>Rubrobacteraceae</taxon>
        <taxon>Rubrobacter</taxon>
    </lineage>
</organism>
<evidence type="ECO:0000255" key="1">
    <source>
        <dbReference type="HAMAP-Rule" id="MF_01576"/>
    </source>
</evidence>
<sequence length="320" mass="33256">MGARVIDGRPIAGELKKRVASEVEGLAARGVRPGLATVLVGEDYAARAYERRVGGLAAELGCRYVCERLPREAEEADVLAVVGKLNADPRVSGILVLRPLPGHISEPAVFSALDPLKDIEAVHPVNAGLLALGRPRYVPSTPAACFYLLDRYLERSGRPPEEFYPRSTVVVVGRSNNVGKPAVSLGFARGAAVISCDANAYRAGRLREHTLKADALIVAAGVAGLIDESYVREGVIAVDVGINPVADPGGSGRTLLVGDLDFGSVARKAEALTPVPGGVGPITDVWLLKNTVAAGRGLAFRARSGGERGAPGISGGYGGQ</sequence>
<proteinExistence type="inferred from homology"/>